<dbReference type="EMBL" id="AE000783">
    <property type="protein sequence ID" value="AAC66621.1"/>
    <property type="molecule type" value="Genomic_DNA"/>
</dbReference>
<dbReference type="PIR" id="D70128">
    <property type="entry name" value="D70128"/>
</dbReference>
<dbReference type="RefSeq" id="NP_212362.1">
    <property type="nucleotide sequence ID" value="NC_001318.1"/>
</dbReference>
<dbReference type="RefSeq" id="WP_002665373.1">
    <property type="nucleotide sequence ID" value="NC_001318.1"/>
</dbReference>
<dbReference type="SMR" id="O51246"/>
<dbReference type="STRING" id="224326.BB_0228"/>
<dbReference type="PaxDb" id="224326-BB_0228"/>
<dbReference type="EnsemblBacteria" id="AAC66621">
    <property type="protein sequence ID" value="AAC66621"/>
    <property type="gene ID" value="BB_0228"/>
</dbReference>
<dbReference type="KEGG" id="bbu:BB_0228"/>
<dbReference type="PATRIC" id="fig|224326.49.peg.627"/>
<dbReference type="HOGENOM" id="CLU_009165_1_0_12"/>
<dbReference type="OrthoDB" id="9762027at2"/>
<dbReference type="Proteomes" id="UP000001807">
    <property type="component" value="Chromosome"/>
</dbReference>
<dbReference type="GO" id="GO:0046872">
    <property type="term" value="F:metal ion binding"/>
    <property type="evidence" value="ECO:0007669"/>
    <property type="project" value="InterPro"/>
</dbReference>
<dbReference type="GO" id="GO:0004222">
    <property type="term" value="F:metalloendopeptidase activity"/>
    <property type="evidence" value="ECO:0007669"/>
    <property type="project" value="TreeGrafter"/>
</dbReference>
<dbReference type="GO" id="GO:0016485">
    <property type="term" value="P:protein processing"/>
    <property type="evidence" value="ECO:0007669"/>
    <property type="project" value="TreeGrafter"/>
</dbReference>
<dbReference type="Gene3D" id="3.30.830.10">
    <property type="entry name" value="Metalloenzyme, LuxS/M16 peptidase-like"/>
    <property type="match status" value="4"/>
</dbReference>
<dbReference type="InterPro" id="IPR011249">
    <property type="entry name" value="Metalloenz_LuxS/M16"/>
</dbReference>
<dbReference type="InterPro" id="IPR011765">
    <property type="entry name" value="Pept_M16_N"/>
</dbReference>
<dbReference type="InterPro" id="IPR007863">
    <property type="entry name" value="Peptidase_M16_C"/>
</dbReference>
<dbReference type="InterPro" id="IPR013578">
    <property type="entry name" value="Peptidase_M16C_assoc"/>
</dbReference>
<dbReference type="InterPro" id="IPR055130">
    <property type="entry name" value="PreP_C"/>
</dbReference>
<dbReference type="PANTHER" id="PTHR43016">
    <property type="entry name" value="PRESEQUENCE PROTEASE"/>
    <property type="match status" value="1"/>
</dbReference>
<dbReference type="PANTHER" id="PTHR43016:SF13">
    <property type="entry name" value="PRESEQUENCE PROTEASE, MITOCHONDRIAL"/>
    <property type="match status" value="1"/>
</dbReference>
<dbReference type="Pfam" id="PF08367">
    <property type="entry name" value="M16C_assoc"/>
    <property type="match status" value="1"/>
</dbReference>
<dbReference type="Pfam" id="PF00675">
    <property type="entry name" value="Peptidase_M16"/>
    <property type="match status" value="1"/>
</dbReference>
<dbReference type="Pfam" id="PF05193">
    <property type="entry name" value="Peptidase_M16_C"/>
    <property type="match status" value="1"/>
</dbReference>
<dbReference type="Pfam" id="PF22516">
    <property type="entry name" value="PreP_C"/>
    <property type="match status" value="1"/>
</dbReference>
<dbReference type="SMART" id="SM01264">
    <property type="entry name" value="M16C_associated"/>
    <property type="match status" value="1"/>
</dbReference>
<dbReference type="SUPFAM" id="SSF63411">
    <property type="entry name" value="LuxS/MPP-like metallohydrolase"/>
    <property type="match status" value="4"/>
</dbReference>
<feature type="chain" id="PRO_0000178017" description="Uncharacterized protein BB_0228">
    <location>
        <begin position="1"/>
        <end position="971"/>
    </location>
</feature>
<accession>O51246</accession>
<organism>
    <name type="scientific">Borreliella burgdorferi (strain ATCC 35210 / DSM 4680 / CIP 102532 / B31)</name>
    <name type="common">Borrelia burgdorferi</name>
    <dbReference type="NCBI Taxonomy" id="224326"/>
    <lineage>
        <taxon>Bacteria</taxon>
        <taxon>Pseudomonadati</taxon>
        <taxon>Spirochaetota</taxon>
        <taxon>Spirochaetia</taxon>
        <taxon>Spirochaetales</taxon>
        <taxon>Borreliaceae</taxon>
        <taxon>Borreliella</taxon>
    </lineage>
</organism>
<keyword id="KW-1185">Reference proteome</keyword>
<name>Y228_BORBU</name>
<protein>
    <recommendedName>
        <fullName>Uncharacterized protein BB_0228</fullName>
    </recommendedName>
</protein>
<sequence>MKKKKIFKLISKTYLEEHDAEGYYFKHESGLEVFHLKSDSFKENAFCIAFKTIPSNNTGVAHVLEHTIFCGSSKYKIKDPFLYLLKGSLNTFLNAMTFPDKTIYPAASTIEKDYFNLFNIYADSIFNPLLKKESFMQEGYNINPKDFKVSGIVFNEMKGSYSNKNSLINEIVSSSLFEEGAYKYDSGGIPTNIIDLTYESFLDFYKKYYTLENCKIFLCGNTQTEKNLNFIEKYIIRPYKKEKSNVNINIENVKRWEKGKKLTYKIPKENDNSLGVYTINWLCTEINNIEDSIGLEILSEILLDDSCSFTINILKSGIGEDIAHISGINTDLKESIFSFGLQNVVENKEKEFKNLVFSELKNLVKNKIPKELIKGILFGYEFALKEEKGQNFPIALMIKSFKGWLNGLHPIKTLQTSYYINEITNKLEKGIYYFENLIEKYLIFNNHYTLISFIPSHDTEKEMEEEIEKKLMAREIEIKQNPEEFLQFKKDYNQFKKYQNKKDSKADIAKLPLLKIEDLPKQIEKSLDLNEIKELNLHSFKFKSNNIFNVNLFFKLDFLEKEDYIYLSLFKRALQDLSTKNYSYININNKIQNTLGQINISESYDEDIDGNILNSFNISFKSFNNKVKESFELIKEILININFHDYERLKEITLSLKNDFKSLLIPKGHLLAMLRSKSKLKLNEYLKELQNGITGREFWQKAKTDTESLKEIANKLDNLKNKIILKNNLSALIMGNTDDILKNLENEFFNLKESLEESNHYNGLLNLDANSKALREIIIIQSKVAFNAICFPSYKINDENYPKANFLEHVLRSGIFWEKIRVMGGAYGASASIANGIFSFASYRDPNFTKTYQAFEKSLEELANNKMTDDEIYTYLIGLIGTNIYVKTKATEALQSYRRKMLNISDSLRQDIRNAYFTITPQDIKEISTKILTQIRQHNSIASLVNNQIYEEEKNNLEKLIGKEYSLKKIY</sequence>
<reference key="1">
    <citation type="journal article" date="1997" name="Nature">
        <title>Genomic sequence of a Lyme disease spirochaete, Borrelia burgdorferi.</title>
        <authorList>
            <person name="Fraser C.M."/>
            <person name="Casjens S."/>
            <person name="Huang W.M."/>
            <person name="Sutton G.G."/>
            <person name="Clayton R.A."/>
            <person name="Lathigra R."/>
            <person name="White O."/>
            <person name="Ketchum K.A."/>
            <person name="Dodson R.J."/>
            <person name="Hickey E.K."/>
            <person name="Gwinn M.L."/>
            <person name="Dougherty B.A."/>
            <person name="Tomb J.-F."/>
            <person name="Fleischmann R.D."/>
            <person name="Richardson D.L."/>
            <person name="Peterson J.D."/>
            <person name="Kerlavage A.R."/>
            <person name="Quackenbush J."/>
            <person name="Salzberg S.L."/>
            <person name="Hanson M."/>
            <person name="van Vugt R."/>
            <person name="Palmer N."/>
            <person name="Adams M.D."/>
            <person name="Gocayne J.D."/>
            <person name="Weidman J.F."/>
            <person name="Utterback T.R."/>
            <person name="Watthey L."/>
            <person name="McDonald L.A."/>
            <person name="Artiach P."/>
            <person name="Bowman C."/>
            <person name="Garland S.A."/>
            <person name="Fujii C."/>
            <person name="Cotton M.D."/>
            <person name="Horst K."/>
            <person name="Roberts K.M."/>
            <person name="Hatch B."/>
            <person name="Smith H.O."/>
            <person name="Venter J.C."/>
        </authorList>
    </citation>
    <scope>NUCLEOTIDE SEQUENCE [LARGE SCALE GENOMIC DNA]</scope>
    <source>
        <strain>ATCC 35210 / DSM 4680 / CIP 102532 / B31</strain>
    </source>
</reference>
<proteinExistence type="predicted"/>
<gene>
    <name type="ordered locus">BB_0228</name>
</gene>